<feature type="chain" id="PRO_0000115297" description="Uncharacterized protein HHLF2">
    <location>
        <begin position="1"/>
        <end position="109"/>
    </location>
</feature>
<accession>P09696</accession>
<dbReference type="EMBL" id="X17403">
    <property type="protein sequence ID" value="CAA35267.1"/>
    <property type="molecule type" value="Genomic_DNA"/>
</dbReference>
<dbReference type="EMBL" id="X04650">
    <property type="protein sequence ID" value="CAB37120.1"/>
    <property type="molecule type" value="Genomic_DNA"/>
</dbReference>
<dbReference type="PIR" id="S09949">
    <property type="entry name" value="QQBEE2"/>
</dbReference>
<dbReference type="Proteomes" id="UP000008991">
    <property type="component" value="Segment"/>
</dbReference>
<gene>
    <name type="primary">US35</name>
</gene>
<reference key="1">
    <citation type="journal article" date="1986" name="J. Mol. Biol.">
        <title>Sequence of the short unique region, short repeats, and part of the long repeats of human cytomegalovirus.</title>
        <authorList>
            <person name="Weston K.M."/>
            <person name="Barrell B.G."/>
        </authorList>
    </citation>
    <scope>NUCLEOTIDE SEQUENCE [GENOMIC DNA]</scope>
</reference>
<reference key="2">
    <citation type="journal article" date="1990" name="Curr. Top. Microbiol. Immunol.">
        <title>Analysis of the protein-coding content of the sequence of human cytomegalovirus strain AD169.</title>
        <authorList>
            <person name="Chee M.S."/>
            <person name="Bankier A.T."/>
            <person name="Beck S."/>
            <person name="Bohni R."/>
            <person name="Brown C.M."/>
            <person name="Cerny R."/>
            <person name="Horsnell T."/>
            <person name="Hutchison C.A. III"/>
            <person name="Kouzarides T."/>
            <person name="Martignetti J.A."/>
            <person name="Preddie E."/>
            <person name="Satchwell S.C."/>
            <person name="Tomlinson P."/>
            <person name="Weston K.M."/>
            <person name="Barrell B.G."/>
        </authorList>
    </citation>
    <scope>NUCLEOTIDE SEQUENCE [LARGE SCALE GENOMIC DNA]</scope>
</reference>
<protein>
    <recommendedName>
        <fullName>Uncharacterized protein HHLF2</fullName>
    </recommendedName>
</protein>
<organismHost>
    <name type="scientific">Homo sapiens</name>
    <name type="common">Human</name>
    <dbReference type="NCBI Taxonomy" id="9606"/>
</organismHost>
<organism>
    <name type="scientific">Human cytomegalovirus (strain AD169)</name>
    <name type="common">HHV-5</name>
    <name type="synonym">Human herpesvirus 5</name>
    <dbReference type="NCBI Taxonomy" id="10360"/>
    <lineage>
        <taxon>Viruses</taxon>
        <taxon>Duplodnaviria</taxon>
        <taxon>Heunggongvirae</taxon>
        <taxon>Peploviricota</taxon>
        <taxon>Herviviricetes</taxon>
        <taxon>Herpesvirales</taxon>
        <taxon>Orthoherpesviridae</taxon>
        <taxon>Betaherpesvirinae</taxon>
        <taxon>Cytomegalovirus</taxon>
        <taxon>Cytomegalovirus humanbeta5</taxon>
        <taxon>Human cytomegalovirus</taxon>
    </lineage>
</organism>
<name>US35_HCMVA</name>
<proteinExistence type="predicted"/>
<sequence length="109" mass="12966">EHRHMTAHIIARNTNVAYAQRQTQLFAPPPHTRDFHTEVPLYALHGFRSDNNTAYLHMFHPHTSPPFMRYIHPKMKNQDTHNMILHIFFIETYRSGAGTFLVTHRHLRQ</sequence>